<name>CA43B_CONAH</name>
<sequence>SDVRNAAVHERQKELVPSKITTCCGYSPGTACPSCMCTNTCKKKNKKPGRRND</sequence>
<feature type="propeptide" id="PRO_0000377454" evidence="1">
    <location>
        <begin position="1" status="less than"/>
        <end position="11"/>
    </location>
</feature>
<feature type="peptide" id="PRO_0000377455" description="Conotoxin Ac4.3b" evidence="1">
    <location>
        <begin position="12"/>
        <end position="48"/>
    </location>
</feature>
<feature type="propeptide" id="PRO_0000377456" evidence="1">
    <location>
        <begin position="49"/>
        <end position="53"/>
    </location>
</feature>
<feature type="modified residue" description="Pyrrolidone carboxylic acid" evidence="2">
    <location>
        <position position="12"/>
    </location>
</feature>
<feature type="modified residue" description="4-carboxyglutamate" evidence="1">
    <location>
        <position position="14"/>
    </location>
</feature>
<feature type="modified residue" description="4-hydroxyproline" evidence="1">
    <location>
        <position position="28"/>
    </location>
</feature>
<feature type="modified residue" description="4-hydroxyproline" evidence="1">
    <location>
        <position position="33"/>
    </location>
</feature>
<feature type="modified residue" description="4-hydroxyproline" evidence="1">
    <location>
        <position position="48"/>
    </location>
</feature>
<feature type="modified residue" description="Proline amide" evidence="1">
    <location>
        <position position="48"/>
    </location>
</feature>
<feature type="glycosylation site" description="O-linked (HexNAc...) serine" evidence="2">
    <location>
        <position position="18"/>
    </location>
</feature>
<feature type="non-terminal residue">
    <location>
        <position position="1"/>
    </location>
</feature>
<reference key="1">
    <citation type="journal article" date="2007" name="Toxicon">
        <title>From the identification of gene organization of alpha conotoxins to the cloning of novel toxins.</title>
        <authorList>
            <person name="Yuan D.-D."/>
            <person name="Han Y.-H."/>
            <person name="Wang C.-G."/>
            <person name="Chi C.-W."/>
        </authorList>
    </citation>
    <scope>NUCLEOTIDE SEQUENCE [GENOMIC DNA]</scope>
</reference>
<dbReference type="EMBL" id="DQ311075">
    <property type="protein sequence ID" value="ABD33867.1"/>
    <property type="molecule type" value="Genomic_DNA"/>
</dbReference>
<dbReference type="SMR" id="P0CAQ3"/>
<dbReference type="ConoServer" id="565">
    <property type="toxin name" value="Ac4.3b precursor"/>
</dbReference>
<dbReference type="GO" id="GO:0005576">
    <property type="term" value="C:extracellular region"/>
    <property type="evidence" value="ECO:0007669"/>
    <property type="project" value="UniProtKB-SubCell"/>
</dbReference>
<dbReference type="GO" id="GO:0030550">
    <property type="term" value="F:acetylcholine receptor inhibitor activity"/>
    <property type="evidence" value="ECO:0007669"/>
    <property type="project" value="InterPro"/>
</dbReference>
<dbReference type="GO" id="GO:0099106">
    <property type="term" value="F:ion channel regulator activity"/>
    <property type="evidence" value="ECO:0007669"/>
    <property type="project" value="UniProtKB-KW"/>
</dbReference>
<dbReference type="GO" id="GO:0090729">
    <property type="term" value="F:toxin activity"/>
    <property type="evidence" value="ECO:0007669"/>
    <property type="project" value="UniProtKB-KW"/>
</dbReference>
<dbReference type="InterPro" id="IPR009958">
    <property type="entry name" value="Conotoxin_a-typ"/>
</dbReference>
<dbReference type="Pfam" id="PF07365">
    <property type="entry name" value="Toxin_8"/>
    <property type="match status" value="1"/>
</dbReference>
<protein>
    <recommendedName>
        <fullName evidence="4">Conotoxin Ac4.3b</fullName>
    </recommendedName>
    <alternativeName>
        <fullName evidence="4">KappaA-conotoxin</fullName>
    </alternativeName>
</protein>
<evidence type="ECO:0000250" key="1">
    <source>
        <dbReference type="UniProtKB" id="P0C1X1"/>
    </source>
</evidence>
<evidence type="ECO:0000250" key="2">
    <source>
        <dbReference type="UniProtKB" id="P0C828"/>
    </source>
</evidence>
<evidence type="ECO:0000250" key="3">
    <source>
        <dbReference type="UniProtKB" id="P0DQY7"/>
    </source>
</evidence>
<evidence type="ECO:0000303" key="4">
    <source>
    </source>
</evidence>
<evidence type="ECO:0000305" key="5"/>
<comment type="function">
    <text evidence="5">Probable neurotoxin with ion channel inhibitor activity.</text>
</comment>
<comment type="subcellular location">
    <subcellularLocation>
        <location evidence="5">Secreted</location>
    </subcellularLocation>
</comment>
<comment type="tissue specificity">
    <text evidence="5">Expressed by the venom duct.</text>
</comment>
<comment type="domain">
    <text evidence="5">The cysteine framework is IV (CC-C-C-C-C).</text>
</comment>
<comment type="PTM">
    <text evidence="3">Contains 3 disulfide bonds.</text>
</comment>
<comment type="similarity">
    <text evidence="5">Belongs to the conotoxin A superfamily.</text>
</comment>
<proteinExistence type="inferred from homology"/>
<accession>P0CAQ3</accession>
<accession>A3DT45</accession>
<accession>A3DT46</accession>
<keyword id="KW-0027">Amidation</keyword>
<keyword id="KW-1015">Disulfide bond</keyword>
<keyword id="KW-0301">Gamma-carboxyglutamic acid</keyword>
<keyword id="KW-0325">Glycoprotein</keyword>
<keyword id="KW-0379">Hydroxylation</keyword>
<keyword id="KW-0872">Ion channel impairing toxin</keyword>
<keyword id="KW-0528">Neurotoxin</keyword>
<keyword id="KW-0873">Pyrrolidone carboxylic acid</keyword>
<keyword id="KW-0964">Secreted</keyword>
<keyword id="KW-0800">Toxin</keyword>
<organism>
    <name type="scientific">Conus achatinus</name>
    <name type="common">Little frog cone</name>
    <dbReference type="NCBI Taxonomy" id="369967"/>
    <lineage>
        <taxon>Eukaryota</taxon>
        <taxon>Metazoa</taxon>
        <taxon>Spiralia</taxon>
        <taxon>Lophotrochozoa</taxon>
        <taxon>Mollusca</taxon>
        <taxon>Gastropoda</taxon>
        <taxon>Caenogastropoda</taxon>
        <taxon>Neogastropoda</taxon>
        <taxon>Conoidea</taxon>
        <taxon>Conidae</taxon>
        <taxon>Conus</taxon>
        <taxon>Pionoconus</taxon>
    </lineage>
</organism>